<comment type="function">
    <text evidence="1">The glycine cleavage system catalyzes the degradation of glycine. The P protein binds the alpha-amino group of glycine through its pyridoxal phosphate cofactor; CO(2) is released and the remaining methylamine moiety is then transferred to the lipoamide cofactor of the H protein.</text>
</comment>
<comment type="catalytic activity">
    <reaction evidence="1">
        <text>N(6)-[(R)-lipoyl]-L-lysyl-[glycine-cleavage complex H protein] + glycine + H(+) = N(6)-[(R)-S(8)-aminomethyldihydrolipoyl]-L-lysyl-[glycine-cleavage complex H protein] + CO2</text>
        <dbReference type="Rhea" id="RHEA:24304"/>
        <dbReference type="Rhea" id="RHEA-COMP:10494"/>
        <dbReference type="Rhea" id="RHEA-COMP:10495"/>
        <dbReference type="ChEBI" id="CHEBI:15378"/>
        <dbReference type="ChEBI" id="CHEBI:16526"/>
        <dbReference type="ChEBI" id="CHEBI:57305"/>
        <dbReference type="ChEBI" id="CHEBI:83099"/>
        <dbReference type="ChEBI" id="CHEBI:83143"/>
        <dbReference type="EC" id="1.4.4.2"/>
    </reaction>
</comment>
<comment type="cofactor">
    <cofactor evidence="1">
        <name>pyridoxal 5'-phosphate</name>
        <dbReference type="ChEBI" id="CHEBI:597326"/>
    </cofactor>
</comment>
<comment type="subunit">
    <text evidence="1">The glycine cleavage system is composed of four proteins: P, T, L and H. In this organism, the P 'protein' is a heterodimer of two subunits.</text>
</comment>
<comment type="similarity">
    <text evidence="1">Belongs to the GcvP family. C-terminal subunit subfamily.</text>
</comment>
<proteinExistence type="evidence at protein level"/>
<feature type="chain" id="PRO_1000045709" description="Probable glycine dehydrogenase (decarboxylating) subunit 2">
    <location>
        <begin position="1"/>
        <end position="474"/>
    </location>
</feature>
<feature type="modified residue" description="N6-(pyridoxal phosphate)lysine" evidence="1">
    <location>
        <position position="266"/>
    </location>
</feature>
<feature type="helix" evidence="3">
    <location>
        <begin position="6"/>
        <end position="9"/>
    </location>
</feature>
<feature type="helix" evidence="3">
    <location>
        <begin position="26"/>
        <end position="29"/>
    </location>
</feature>
<feature type="helix" evidence="3">
    <location>
        <begin position="32"/>
        <end position="34"/>
    </location>
</feature>
<feature type="helix" evidence="3">
    <location>
        <begin position="47"/>
        <end position="58"/>
    </location>
</feature>
<feature type="turn" evidence="3">
    <location>
        <begin position="64"/>
        <end position="66"/>
    </location>
</feature>
<feature type="turn" evidence="3">
    <location>
        <begin position="72"/>
        <end position="74"/>
    </location>
</feature>
<feature type="helix" evidence="3">
    <location>
        <begin position="81"/>
        <end position="88"/>
    </location>
</feature>
<feature type="helix" evidence="3">
    <location>
        <begin position="99"/>
        <end position="101"/>
    </location>
</feature>
<feature type="helix" evidence="3">
    <location>
        <begin position="103"/>
        <end position="120"/>
    </location>
</feature>
<feature type="strand" evidence="3">
    <location>
        <begin position="123"/>
        <end position="126"/>
    </location>
</feature>
<feature type="helix" evidence="3">
    <location>
        <begin position="132"/>
        <end position="149"/>
    </location>
</feature>
<feature type="turn" evidence="3">
    <location>
        <begin position="153"/>
        <end position="155"/>
    </location>
</feature>
<feature type="strand" evidence="3">
    <location>
        <begin position="158"/>
        <end position="162"/>
    </location>
</feature>
<feature type="helix" evidence="3">
    <location>
        <begin position="168"/>
        <end position="175"/>
    </location>
</feature>
<feature type="strand" evidence="3">
    <location>
        <begin position="179"/>
        <end position="183"/>
    </location>
</feature>
<feature type="strand" evidence="3">
    <location>
        <begin position="189"/>
        <end position="191"/>
    </location>
</feature>
<feature type="helix" evidence="3">
    <location>
        <begin position="193"/>
        <end position="199"/>
    </location>
</feature>
<feature type="strand" evidence="3">
    <location>
        <begin position="204"/>
        <end position="209"/>
    </location>
</feature>
<feature type="helix" evidence="3">
    <location>
        <begin position="222"/>
        <end position="231"/>
    </location>
</feature>
<feature type="strand" evidence="3">
    <location>
        <begin position="235"/>
        <end position="239"/>
    </location>
</feature>
<feature type="helix" evidence="3">
    <location>
        <begin position="240"/>
        <end position="245"/>
    </location>
</feature>
<feature type="turn" evidence="3">
    <location>
        <begin position="246"/>
        <end position="249"/>
    </location>
</feature>
<feature type="helix" evidence="3">
    <location>
        <begin position="252"/>
        <end position="255"/>
    </location>
</feature>
<feature type="strand" evidence="3">
    <location>
        <begin position="258"/>
        <end position="261"/>
    </location>
</feature>
<feature type="turn" evidence="3">
    <location>
        <begin position="264"/>
        <end position="268"/>
    </location>
</feature>
<feature type="helix" evidence="2">
    <location>
        <begin position="273"/>
        <end position="275"/>
    </location>
</feature>
<feature type="strand" evidence="3">
    <location>
        <begin position="282"/>
        <end position="284"/>
    </location>
</feature>
<feature type="helix" evidence="3">
    <location>
        <begin position="286"/>
        <end position="291"/>
    </location>
</feature>
<feature type="strand" evidence="3">
    <location>
        <begin position="296"/>
        <end position="299"/>
    </location>
</feature>
<feature type="strand" evidence="3">
    <location>
        <begin position="304"/>
        <end position="307"/>
    </location>
</feature>
<feature type="strand" evidence="3">
    <location>
        <begin position="317"/>
        <end position="319"/>
    </location>
</feature>
<feature type="helix" evidence="3">
    <location>
        <begin position="324"/>
        <end position="362"/>
    </location>
</feature>
<feature type="strand" evidence="3">
    <location>
        <begin position="377"/>
        <end position="380"/>
    </location>
</feature>
<feature type="helix" evidence="3">
    <location>
        <begin position="387"/>
        <end position="396"/>
    </location>
</feature>
<feature type="strand" evidence="3">
    <location>
        <begin position="403"/>
        <end position="405"/>
    </location>
</feature>
<feature type="strand" evidence="3">
    <location>
        <begin position="414"/>
        <end position="416"/>
    </location>
</feature>
<feature type="helix" evidence="3">
    <location>
        <begin position="424"/>
        <end position="438"/>
    </location>
</feature>
<feature type="helix" evidence="3">
    <location>
        <begin position="442"/>
        <end position="446"/>
    </location>
</feature>
<feature type="strand" evidence="3">
    <location>
        <begin position="451"/>
        <end position="454"/>
    </location>
</feature>
<feature type="helix" evidence="3">
    <location>
        <begin position="459"/>
        <end position="464"/>
    </location>
</feature>
<feature type="strand" evidence="3">
    <location>
        <begin position="469"/>
        <end position="471"/>
    </location>
</feature>
<sequence>MSFPLIFERSRKGRRGLKLVKAVPKAEDLIPKEHLREVPPRLPEVDELTLVRHYTGLSRRQVGVDTTFYPLGSCTMKYNPKLHEEAARLFADLHPYQDPRTAQGALRLMWELGEYLKALTGMDAITLEPAAGAHGELTGILIIRAYHEDRGEGRTRRVVLVPDSAHGSNPATASMAGYQVREIPSGPEGEVDLEALKRELGPHVAALMLTNPNTLGLFERRILEISRLCKEAGVQLYYDGANLNAIMGWARPGDMGFDVVHLNLHKTFTVPHGGGGPGSGPVGVKAHLAPYLPVPLVERGEEGFYLDFDRPKSIGRVRSFYGNFLALVRAWAYIRTLGLEGLKKAAALAVLNARYLKELLKEKGYRVPYDGPSMHEFVAQPPEGFRALDLAKGLLELGFHPPTVYFPLIVKEALMVEPTETEAKETLEAFAEAMGALLKKPKEWLENAPYSTPVRRLDELRANKHPKLTYFDEG</sequence>
<organism>
    <name type="scientific">Thermus thermophilus (strain ATCC 27634 / DSM 579 / HB8)</name>
    <dbReference type="NCBI Taxonomy" id="300852"/>
    <lineage>
        <taxon>Bacteria</taxon>
        <taxon>Thermotogati</taxon>
        <taxon>Deinococcota</taxon>
        <taxon>Deinococci</taxon>
        <taxon>Thermales</taxon>
        <taxon>Thermaceae</taxon>
        <taxon>Thermus</taxon>
    </lineage>
</organism>
<dbReference type="EC" id="1.4.4.2" evidence="1"/>
<dbReference type="EMBL" id="AP008226">
    <property type="protein sequence ID" value="BAD70349.1"/>
    <property type="molecule type" value="Genomic_DNA"/>
</dbReference>
<dbReference type="RefSeq" id="WP_011228003.1">
    <property type="nucleotide sequence ID" value="NC_006461.1"/>
</dbReference>
<dbReference type="RefSeq" id="YP_143792.1">
    <property type="nucleotide sequence ID" value="NC_006461.1"/>
</dbReference>
<dbReference type="PDB" id="1WYT">
    <property type="method" value="X-ray"/>
    <property type="resolution" value="2.40 A"/>
    <property type="chains" value="B/D=1-474"/>
</dbReference>
<dbReference type="PDB" id="1WYU">
    <property type="method" value="X-ray"/>
    <property type="resolution" value="2.10 A"/>
    <property type="chains" value="B/D/F/H=1-474"/>
</dbReference>
<dbReference type="PDB" id="1WYV">
    <property type="method" value="X-ray"/>
    <property type="resolution" value="2.40 A"/>
    <property type="chains" value="B/D/F/H=1-474"/>
</dbReference>
<dbReference type="PDBsum" id="1WYT"/>
<dbReference type="PDBsum" id="1WYU"/>
<dbReference type="PDBsum" id="1WYV"/>
<dbReference type="SMR" id="Q5SKW7"/>
<dbReference type="EnsemblBacteria" id="BAD70349">
    <property type="protein sequence ID" value="BAD70349"/>
    <property type="gene ID" value="BAD70349"/>
</dbReference>
<dbReference type="GeneID" id="3168946"/>
<dbReference type="KEGG" id="ttj:TTHA0526"/>
<dbReference type="PATRIC" id="fig|300852.9.peg.524"/>
<dbReference type="eggNOG" id="COG1003">
    <property type="taxonomic scope" value="Bacteria"/>
</dbReference>
<dbReference type="HOGENOM" id="CLU_004620_5_0_0"/>
<dbReference type="PhylomeDB" id="Q5SKW7"/>
<dbReference type="EvolutionaryTrace" id="Q5SKW7"/>
<dbReference type="Proteomes" id="UP000000532">
    <property type="component" value="Chromosome"/>
</dbReference>
<dbReference type="GO" id="GO:0005829">
    <property type="term" value="C:cytosol"/>
    <property type="evidence" value="ECO:0007669"/>
    <property type="project" value="TreeGrafter"/>
</dbReference>
<dbReference type="GO" id="GO:0005960">
    <property type="term" value="C:glycine cleavage complex"/>
    <property type="evidence" value="ECO:0007669"/>
    <property type="project" value="TreeGrafter"/>
</dbReference>
<dbReference type="GO" id="GO:0016594">
    <property type="term" value="F:glycine binding"/>
    <property type="evidence" value="ECO:0007669"/>
    <property type="project" value="TreeGrafter"/>
</dbReference>
<dbReference type="GO" id="GO:0004375">
    <property type="term" value="F:glycine dehydrogenase (decarboxylating) activity"/>
    <property type="evidence" value="ECO:0007669"/>
    <property type="project" value="UniProtKB-EC"/>
</dbReference>
<dbReference type="GO" id="GO:0030170">
    <property type="term" value="F:pyridoxal phosphate binding"/>
    <property type="evidence" value="ECO:0007669"/>
    <property type="project" value="TreeGrafter"/>
</dbReference>
<dbReference type="GO" id="GO:0019464">
    <property type="term" value="P:glycine decarboxylation via glycine cleavage system"/>
    <property type="evidence" value="ECO:0007669"/>
    <property type="project" value="UniProtKB-UniRule"/>
</dbReference>
<dbReference type="CDD" id="cd00613">
    <property type="entry name" value="GDC-P"/>
    <property type="match status" value="1"/>
</dbReference>
<dbReference type="FunFam" id="3.40.640.10:FF:000224">
    <property type="entry name" value="Probable glycine dehydrogenase (decarboxylating) subunit 2"/>
    <property type="match status" value="1"/>
</dbReference>
<dbReference type="Gene3D" id="6.20.440.10">
    <property type="match status" value="1"/>
</dbReference>
<dbReference type="Gene3D" id="3.90.1150.10">
    <property type="entry name" value="Aspartate Aminotransferase, domain 1"/>
    <property type="match status" value="1"/>
</dbReference>
<dbReference type="Gene3D" id="3.40.640.10">
    <property type="entry name" value="Type I PLP-dependent aspartate aminotransferase-like (Major domain)"/>
    <property type="match status" value="1"/>
</dbReference>
<dbReference type="HAMAP" id="MF_00713">
    <property type="entry name" value="GcvPB"/>
    <property type="match status" value="1"/>
</dbReference>
<dbReference type="InterPro" id="IPR023012">
    <property type="entry name" value="GcvPB"/>
</dbReference>
<dbReference type="InterPro" id="IPR049316">
    <property type="entry name" value="GDC-P_C"/>
</dbReference>
<dbReference type="InterPro" id="IPR020581">
    <property type="entry name" value="GDC_P"/>
</dbReference>
<dbReference type="InterPro" id="IPR015424">
    <property type="entry name" value="PyrdxlP-dep_Trfase"/>
</dbReference>
<dbReference type="InterPro" id="IPR015421">
    <property type="entry name" value="PyrdxlP-dep_Trfase_major"/>
</dbReference>
<dbReference type="InterPro" id="IPR015422">
    <property type="entry name" value="PyrdxlP-dep_Trfase_small"/>
</dbReference>
<dbReference type="NCBIfam" id="NF003346">
    <property type="entry name" value="PRK04366.1"/>
    <property type="match status" value="1"/>
</dbReference>
<dbReference type="PANTHER" id="PTHR11773:SF1">
    <property type="entry name" value="GLYCINE DEHYDROGENASE (DECARBOXYLATING), MITOCHONDRIAL"/>
    <property type="match status" value="1"/>
</dbReference>
<dbReference type="PANTHER" id="PTHR11773">
    <property type="entry name" value="GLYCINE DEHYDROGENASE, DECARBOXYLATING"/>
    <property type="match status" value="1"/>
</dbReference>
<dbReference type="Pfam" id="PF21478">
    <property type="entry name" value="GcvP2_C"/>
    <property type="match status" value="1"/>
</dbReference>
<dbReference type="SUPFAM" id="SSF53383">
    <property type="entry name" value="PLP-dependent transferases"/>
    <property type="match status" value="1"/>
</dbReference>
<name>GCSPB_THET8</name>
<gene>
    <name evidence="1" type="primary">gcvPB</name>
    <name type="ordered locus">TTHA0526</name>
</gene>
<evidence type="ECO:0000255" key="1">
    <source>
        <dbReference type="HAMAP-Rule" id="MF_00713"/>
    </source>
</evidence>
<evidence type="ECO:0007829" key="2">
    <source>
        <dbReference type="PDB" id="1WYT"/>
    </source>
</evidence>
<evidence type="ECO:0007829" key="3">
    <source>
        <dbReference type="PDB" id="1WYU"/>
    </source>
</evidence>
<protein>
    <recommendedName>
        <fullName evidence="1">Probable glycine dehydrogenase (decarboxylating) subunit 2</fullName>
        <ecNumber evidence="1">1.4.4.2</ecNumber>
    </recommendedName>
    <alternativeName>
        <fullName evidence="1">Glycine cleavage system P-protein subunit 2</fullName>
    </alternativeName>
    <alternativeName>
        <fullName evidence="1">Glycine decarboxylase subunit 2</fullName>
    </alternativeName>
    <alternativeName>
        <fullName evidence="1">Glycine dehydrogenase (aminomethyl-transferring) subunit 2</fullName>
    </alternativeName>
</protein>
<reference key="1">
    <citation type="submission" date="2004-11" db="EMBL/GenBank/DDBJ databases">
        <title>Complete genome sequence of Thermus thermophilus HB8.</title>
        <authorList>
            <person name="Masui R."/>
            <person name="Kurokawa K."/>
            <person name="Nakagawa N."/>
            <person name="Tokunaga F."/>
            <person name="Koyama Y."/>
            <person name="Shibata T."/>
            <person name="Oshima T."/>
            <person name="Yokoyama S."/>
            <person name="Yasunaga T."/>
            <person name="Kuramitsu S."/>
        </authorList>
    </citation>
    <scope>NUCLEOTIDE SEQUENCE [LARGE SCALE GENOMIC DNA]</scope>
    <source>
        <strain>ATCC 27634 / DSM 579 / HB8</strain>
    </source>
</reference>
<reference key="2">
    <citation type="journal article" date="2005" name="EMBO J.">
        <title>Structure of P-protein of the glycine cleavage system: implications for nonketotic hyperglycinemia.</title>
        <authorList>
            <person name="Nakai T."/>
            <person name="Nakagawa N."/>
            <person name="Maoka N."/>
            <person name="Masui R."/>
            <person name="Kuramitsu S."/>
            <person name="Kamiya N."/>
        </authorList>
    </citation>
    <scope>X-RAY CRYSTALLOGRAPHY (2.4 ANGSTROMS)</scope>
</reference>
<keyword id="KW-0002">3D-structure</keyword>
<keyword id="KW-0560">Oxidoreductase</keyword>
<keyword id="KW-0663">Pyridoxal phosphate</keyword>
<keyword id="KW-1185">Reference proteome</keyword>
<accession>Q5SKW7</accession>